<name>LRK61_ARATH</name>
<proteinExistence type="evidence at transcript level"/>
<dbReference type="EC" id="2.7.11.1"/>
<dbReference type="EMBL" id="AC010871">
    <property type="protein sequence ID" value="AAF07845.1"/>
    <property type="molecule type" value="Genomic_DNA"/>
</dbReference>
<dbReference type="EMBL" id="CP002686">
    <property type="protein sequence ID" value="AEE74689.1"/>
    <property type="molecule type" value="Genomic_DNA"/>
</dbReference>
<dbReference type="RefSeq" id="NP_187499.1">
    <property type="nucleotide sequence ID" value="NM_111721.2"/>
</dbReference>
<dbReference type="SMR" id="Q9SR87"/>
<dbReference type="FunCoup" id="Q9SR87">
    <property type="interactions" value="36"/>
</dbReference>
<dbReference type="STRING" id="3702.Q9SR87"/>
<dbReference type="GlyCosmos" id="Q9SR87">
    <property type="glycosylation" value="7 sites, No reported glycans"/>
</dbReference>
<dbReference type="GlyGen" id="Q9SR87">
    <property type="glycosylation" value="7 sites"/>
</dbReference>
<dbReference type="PaxDb" id="3702-AT3G08870.1"/>
<dbReference type="ProteomicsDB" id="238566"/>
<dbReference type="EnsemblPlants" id="AT3G08870.1">
    <property type="protein sequence ID" value="AT3G08870.1"/>
    <property type="gene ID" value="AT3G08870"/>
</dbReference>
<dbReference type="GeneID" id="820035"/>
<dbReference type="Gramene" id="AT3G08870.1">
    <property type="protein sequence ID" value="AT3G08870.1"/>
    <property type="gene ID" value="AT3G08870"/>
</dbReference>
<dbReference type="KEGG" id="ath:AT3G08870"/>
<dbReference type="Araport" id="AT3G08870"/>
<dbReference type="TAIR" id="AT3G08870">
    <property type="gene designation" value="LECRK-VI.1"/>
</dbReference>
<dbReference type="eggNOG" id="ENOG502QTCP">
    <property type="taxonomic scope" value="Eukaryota"/>
</dbReference>
<dbReference type="HOGENOM" id="CLU_000288_62_6_1"/>
<dbReference type="InParanoid" id="Q9SR87"/>
<dbReference type="PhylomeDB" id="Q9SR87"/>
<dbReference type="PRO" id="PR:Q9SR87"/>
<dbReference type="Proteomes" id="UP000006548">
    <property type="component" value="Chromosome 3"/>
</dbReference>
<dbReference type="ExpressionAtlas" id="Q9SR87">
    <property type="expression patterns" value="baseline and differential"/>
</dbReference>
<dbReference type="GO" id="GO:0005886">
    <property type="term" value="C:plasma membrane"/>
    <property type="evidence" value="ECO:0000250"/>
    <property type="project" value="UniProtKB"/>
</dbReference>
<dbReference type="GO" id="GO:0005524">
    <property type="term" value="F:ATP binding"/>
    <property type="evidence" value="ECO:0007669"/>
    <property type="project" value="UniProtKB-KW"/>
</dbReference>
<dbReference type="GO" id="GO:0030246">
    <property type="term" value="F:carbohydrate binding"/>
    <property type="evidence" value="ECO:0007669"/>
    <property type="project" value="UniProtKB-KW"/>
</dbReference>
<dbReference type="GO" id="GO:0106310">
    <property type="term" value="F:protein serine kinase activity"/>
    <property type="evidence" value="ECO:0007669"/>
    <property type="project" value="RHEA"/>
</dbReference>
<dbReference type="GO" id="GO:0004674">
    <property type="term" value="F:protein serine/threonine kinase activity"/>
    <property type="evidence" value="ECO:0007669"/>
    <property type="project" value="UniProtKB-KW"/>
</dbReference>
<dbReference type="CDD" id="cd06899">
    <property type="entry name" value="lectin_legume_LecRK_Arcelin_ConA"/>
    <property type="match status" value="1"/>
</dbReference>
<dbReference type="CDD" id="cd14066">
    <property type="entry name" value="STKc_IRAK"/>
    <property type="match status" value="1"/>
</dbReference>
<dbReference type="FunFam" id="1.10.510.10:FF:000108">
    <property type="entry name" value="L-type lectin-domain containing receptor kinase S.4"/>
    <property type="match status" value="1"/>
</dbReference>
<dbReference type="FunFam" id="2.60.120.200:FF:000096">
    <property type="entry name" value="L-type lectin-domain containing receptor kinase V.9"/>
    <property type="match status" value="1"/>
</dbReference>
<dbReference type="FunFam" id="3.30.200.20:FF:000491">
    <property type="entry name" value="Lectin-domain containing receptor kinase VI.3"/>
    <property type="match status" value="1"/>
</dbReference>
<dbReference type="Gene3D" id="2.60.120.200">
    <property type="match status" value="1"/>
</dbReference>
<dbReference type="Gene3D" id="3.30.200.20">
    <property type="entry name" value="Phosphorylase Kinase, domain 1"/>
    <property type="match status" value="1"/>
</dbReference>
<dbReference type="Gene3D" id="1.10.510.10">
    <property type="entry name" value="Transferase(Phosphotransferase) domain 1"/>
    <property type="match status" value="1"/>
</dbReference>
<dbReference type="InterPro" id="IPR013320">
    <property type="entry name" value="ConA-like_dom_sf"/>
</dbReference>
<dbReference type="InterPro" id="IPR011009">
    <property type="entry name" value="Kinase-like_dom_sf"/>
</dbReference>
<dbReference type="InterPro" id="IPR050528">
    <property type="entry name" value="L-type_Lectin-RKs"/>
</dbReference>
<dbReference type="InterPro" id="IPR001220">
    <property type="entry name" value="Legume_lectin_dom"/>
</dbReference>
<dbReference type="InterPro" id="IPR000719">
    <property type="entry name" value="Prot_kinase_dom"/>
</dbReference>
<dbReference type="InterPro" id="IPR017441">
    <property type="entry name" value="Protein_kinase_ATP_BS"/>
</dbReference>
<dbReference type="InterPro" id="IPR008271">
    <property type="entry name" value="Ser/Thr_kinase_AS"/>
</dbReference>
<dbReference type="PANTHER" id="PTHR27007">
    <property type="match status" value="1"/>
</dbReference>
<dbReference type="Pfam" id="PF00139">
    <property type="entry name" value="Lectin_legB"/>
    <property type="match status" value="1"/>
</dbReference>
<dbReference type="Pfam" id="PF00069">
    <property type="entry name" value="Pkinase"/>
    <property type="match status" value="1"/>
</dbReference>
<dbReference type="SMART" id="SM00220">
    <property type="entry name" value="S_TKc"/>
    <property type="match status" value="1"/>
</dbReference>
<dbReference type="SUPFAM" id="SSF49899">
    <property type="entry name" value="Concanavalin A-like lectins/glucanases"/>
    <property type="match status" value="1"/>
</dbReference>
<dbReference type="SUPFAM" id="SSF56112">
    <property type="entry name" value="Protein kinase-like (PK-like)"/>
    <property type="match status" value="1"/>
</dbReference>
<dbReference type="PROSITE" id="PS00107">
    <property type="entry name" value="PROTEIN_KINASE_ATP"/>
    <property type="match status" value="1"/>
</dbReference>
<dbReference type="PROSITE" id="PS50011">
    <property type="entry name" value="PROTEIN_KINASE_DOM"/>
    <property type="match status" value="1"/>
</dbReference>
<dbReference type="PROSITE" id="PS00108">
    <property type="entry name" value="PROTEIN_KINASE_ST"/>
    <property type="match status" value="1"/>
</dbReference>
<accession>Q9SR87</accession>
<gene>
    <name type="primary">LECRK61</name>
    <name type="ordered locus">At3g08870</name>
    <name type="ORF">T16O11.20</name>
</gene>
<organism>
    <name type="scientific">Arabidopsis thaliana</name>
    <name type="common">Mouse-ear cress</name>
    <dbReference type="NCBI Taxonomy" id="3702"/>
    <lineage>
        <taxon>Eukaryota</taxon>
        <taxon>Viridiplantae</taxon>
        <taxon>Streptophyta</taxon>
        <taxon>Embryophyta</taxon>
        <taxon>Tracheophyta</taxon>
        <taxon>Spermatophyta</taxon>
        <taxon>Magnoliopsida</taxon>
        <taxon>eudicotyledons</taxon>
        <taxon>Gunneridae</taxon>
        <taxon>Pentapetalae</taxon>
        <taxon>rosids</taxon>
        <taxon>malvids</taxon>
        <taxon>Brassicales</taxon>
        <taxon>Brassicaceae</taxon>
        <taxon>Camelineae</taxon>
        <taxon>Arabidopsis</taxon>
    </lineage>
</organism>
<protein>
    <recommendedName>
        <fullName>Probable L-type lectin-domain containing receptor kinase VI.1</fullName>
        <shortName>LecRK-VI.1</shortName>
        <ecNumber>2.7.11.1</ecNumber>
    </recommendedName>
</protein>
<comment type="catalytic activity">
    <reaction>
        <text>L-seryl-[protein] + ATP = O-phospho-L-seryl-[protein] + ADP + H(+)</text>
        <dbReference type="Rhea" id="RHEA:17989"/>
        <dbReference type="Rhea" id="RHEA-COMP:9863"/>
        <dbReference type="Rhea" id="RHEA-COMP:11604"/>
        <dbReference type="ChEBI" id="CHEBI:15378"/>
        <dbReference type="ChEBI" id="CHEBI:29999"/>
        <dbReference type="ChEBI" id="CHEBI:30616"/>
        <dbReference type="ChEBI" id="CHEBI:83421"/>
        <dbReference type="ChEBI" id="CHEBI:456216"/>
        <dbReference type="EC" id="2.7.11.1"/>
    </reaction>
</comment>
<comment type="catalytic activity">
    <reaction>
        <text>L-threonyl-[protein] + ATP = O-phospho-L-threonyl-[protein] + ADP + H(+)</text>
        <dbReference type="Rhea" id="RHEA:46608"/>
        <dbReference type="Rhea" id="RHEA-COMP:11060"/>
        <dbReference type="Rhea" id="RHEA-COMP:11605"/>
        <dbReference type="ChEBI" id="CHEBI:15378"/>
        <dbReference type="ChEBI" id="CHEBI:30013"/>
        <dbReference type="ChEBI" id="CHEBI:30616"/>
        <dbReference type="ChEBI" id="CHEBI:61977"/>
        <dbReference type="ChEBI" id="CHEBI:456216"/>
        <dbReference type="EC" id="2.7.11.1"/>
    </reaction>
</comment>
<comment type="subcellular location">
    <subcellularLocation>
        <location evidence="1">Cell membrane</location>
        <topology evidence="1">Single-pass type I membrane protein</topology>
    </subcellularLocation>
</comment>
<comment type="similarity">
    <text evidence="6">In the C-terminal section; belongs to the protein kinase superfamily. Ser/Thr protein kinase family.</text>
</comment>
<comment type="similarity">
    <text evidence="6">In the N-terminal section; belongs to the leguminous lectin family.</text>
</comment>
<reference key="1">
    <citation type="journal article" date="2000" name="Nature">
        <title>Sequence and analysis of chromosome 3 of the plant Arabidopsis thaliana.</title>
        <authorList>
            <person name="Salanoubat M."/>
            <person name="Lemcke K."/>
            <person name="Rieger M."/>
            <person name="Ansorge W."/>
            <person name="Unseld M."/>
            <person name="Fartmann B."/>
            <person name="Valle G."/>
            <person name="Bloecker H."/>
            <person name="Perez-Alonso M."/>
            <person name="Obermaier B."/>
            <person name="Delseny M."/>
            <person name="Boutry M."/>
            <person name="Grivell L.A."/>
            <person name="Mache R."/>
            <person name="Puigdomenech P."/>
            <person name="De Simone V."/>
            <person name="Choisne N."/>
            <person name="Artiguenave F."/>
            <person name="Robert C."/>
            <person name="Brottier P."/>
            <person name="Wincker P."/>
            <person name="Cattolico L."/>
            <person name="Weissenbach J."/>
            <person name="Saurin W."/>
            <person name="Quetier F."/>
            <person name="Schaefer M."/>
            <person name="Mueller-Auer S."/>
            <person name="Gabel C."/>
            <person name="Fuchs M."/>
            <person name="Benes V."/>
            <person name="Wurmbach E."/>
            <person name="Drzonek H."/>
            <person name="Erfle H."/>
            <person name="Jordan N."/>
            <person name="Bangert S."/>
            <person name="Wiedelmann R."/>
            <person name="Kranz H."/>
            <person name="Voss H."/>
            <person name="Holland R."/>
            <person name="Brandt P."/>
            <person name="Nyakatura G."/>
            <person name="Vezzi A."/>
            <person name="D'Angelo M."/>
            <person name="Pallavicini A."/>
            <person name="Toppo S."/>
            <person name="Simionati B."/>
            <person name="Conrad A."/>
            <person name="Hornischer K."/>
            <person name="Kauer G."/>
            <person name="Loehnert T.-H."/>
            <person name="Nordsiek G."/>
            <person name="Reichelt J."/>
            <person name="Scharfe M."/>
            <person name="Schoen O."/>
            <person name="Bargues M."/>
            <person name="Terol J."/>
            <person name="Climent J."/>
            <person name="Navarro P."/>
            <person name="Collado C."/>
            <person name="Perez-Perez A."/>
            <person name="Ottenwaelder B."/>
            <person name="Duchemin D."/>
            <person name="Cooke R."/>
            <person name="Laudie M."/>
            <person name="Berger-Llauro C."/>
            <person name="Purnelle B."/>
            <person name="Masuy D."/>
            <person name="de Haan M."/>
            <person name="Maarse A.C."/>
            <person name="Alcaraz J.-P."/>
            <person name="Cottet A."/>
            <person name="Casacuberta E."/>
            <person name="Monfort A."/>
            <person name="Argiriou A."/>
            <person name="Flores M."/>
            <person name="Liguori R."/>
            <person name="Vitale D."/>
            <person name="Mannhaupt G."/>
            <person name="Haase D."/>
            <person name="Schoof H."/>
            <person name="Rudd S."/>
            <person name="Zaccaria P."/>
            <person name="Mewes H.-W."/>
            <person name="Mayer K.F.X."/>
            <person name="Kaul S."/>
            <person name="Town C.D."/>
            <person name="Koo H.L."/>
            <person name="Tallon L.J."/>
            <person name="Jenkins J."/>
            <person name="Rooney T."/>
            <person name="Rizzo M."/>
            <person name="Walts A."/>
            <person name="Utterback T."/>
            <person name="Fujii C.Y."/>
            <person name="Shea T.P."/>
            <person name="Creasy T.H."/>
            <person name="Haas B."/>
            <person name="Maiti R."/>
            <person name="Wu D."/>
            <person name="Peterson J."/>
            <person name="Van Aken S."/>
            <person name="Pai G."/>
            <person name="Militscher J."/>
            <person name="Sellers P."/>
            <person name="Gill J.E."/>
            <person name="Feldblyum T.V."/>
            <person name="Preuss D."/>
            <person name="Lin X."/>
            <person name="Nierman W.C."/>
            <person name="Salzberg S.L."/>
            <person name="White O."/>
            <person name="Venter J.C."/>
            <person name="Fraser C.M."/>
            <person name="Kaneko T."/>
            <person name="Nakamura Y."/>
            <person name="Sato S."/>
            <person name="Kato T."/>
            <person name="Asamizu E."/>
            <person name="Sasamoto S."/>
            <person name="Kimura T."/>
            <person name="Idesawa K."/>
            <person name="Kawashima K."/>
            <person name="Kishida Y."/>
            <person name="Kiyokawa C."/>
            <person name="Kohara M."/>
            <person name="Matsumoto M."/>
            <person name="Matsuno A."/>
            <person name="Muraki A."/>
            <person name="Nakayama S."/>
            <person name="Nakazaki N."/>
            <person name="Shinpo S."/>
            <person name="Takeuchi C."/>
            <person name="Wada T."/>
            <person name="Watanabe A."/>
            <person name="Yamada M."/>
            <person name="Yasuda M."/>
            <person name="Tabata S."/>
        </authorList>
    </citation>
    <scope>NUCLEOTIDE SEQUENCE [LARGE SCALE GENOMIC DNA]</scope>
    <source>
        <strain>cv. Columbia</strain>
    </source>
</reference>
<reference key="2">
    <citation type="journal article" date="2017" name="Plant J.">
        <title>Araport11: a complete reannotation of the Arabidopsis thaliana reference genome.</title>
        <authorList>
            <person name="Cheng C.Y."/>
            <person name="Krishnakumar V."/>
            <person name="Chan A.P."/>
            <person name="Thibaud-Nissen F."/>
            <person name="Schobel S."/>
            <person name="Town C.D."/>
        </authorList>
    </citation>
    <scope>GENOME REANNOTATION</scope>
    <source>
        <strain>cv. Columbia</strain>
    </source>
</reference>
<reference key="3">
    <citation type="journal article" date="2002" name="Crit. Rev. Plant Sci.">
        <title>Lectin receptor kinases in plants.</title>
        <authorList>
            <person name="Barre A."/>
            <person name="Herve C."/>
            <person name="Lescure B."/>
            <person name="Rouge P."/>
        </authorList>
    </citation>
    <scope>GENE FAMILY</scope>
</reference>
<reference key="4">
    <citation type="journal article" date="2009" name="J. Exp. Bot.">
        <title>Arabidopsis L-type lectin receptor kinases: phylogeny, classification, and expression profiles.</title>
        <authorList>
            <person name="Bouwmeester K."/>
            <person name="Govers F."/>
        </authorList>
    </citation>
    <scope>GENE FAMILY</scope>
    <scope>NOMENCLATURE</scope>
</reference>
<sequence>MGIARSINSFMFFFFLMILSNASKSSVLAEATTAKFTFIGFKENQTDIQTEGASTIQHDNDLLRLTNRKQNVTGTAFYRKPIRLRELTNSSDIKVCSFSTSFVFVILPSSPGNGGFGFTFTLSPTPNRPGAESAQYLGLLNRTNNGNPSNHVFAVEFDTVQGFKDGADRRGNHIGLNFNNLSSNVQEPLIYYDTEDRKEDFQLESGEPIRVLIDYDGSSETLNVTIYPTRLEFKPKKPLISRRVSELSEIVKDEMYVGFTAATGKDQSSAHYVMGWSFSSCGENPMADWLEISRLPPPPRLSNKKGYNSQVIVLIVALSIVTLVLLVLLFIFVMYKRRIQEEDTLEDWEIDYPHRFRYRDLYLATKKFKESEIIGTGGFGIVYRGNLSSSGPIAVKKITSNSLQGVREFMAEIESLGRLGHKNLVNLQGWCKHKNELLLIYDYIPNGSLDSLLYQTPRRNGIVLPWDVRFEIIKGIASGLLYLHEEWEQIVVHRDVKPSNVLIDEDMNAKLGDFGLARLYERGTLTQTTKIVGTLGYMAPELTRNGKGSTASDVFAFGVLLLEIVCGNKPTNAENFFLADWVMEFHTNGGILCVVDQNLGSSFNGREAKLALVVGLLCCHQKPKFRPSMRMVLRYLNGEENVPQIDENWGFSDSSRDDHKSNVVGYVSSDRASSSNTFSSFSNVSSSSIVSGR</sequence>
<evidence type="ECO:0000250" key="1"/>
<evidence type="ECO:0000255" key="2"/>
<evidence type="ECO:0000255" key="3">
    <source>
        <dbReference type="PROSITE-ProRule" id="PRU00159"/>
    </source>
</evidence>
<evidence type="ECO:0000255" key="4">
    <source>
        <dbReference type="PROSITE-ProRule" id="PRU10027"/>
    </source>
</evidence>
<evidence type="ECO:0000256" key="5">
    <source>
        <dbReference type="SAM" id="MobiDB-lite"/>
    </source>
</evidence>
<evidence type="ECO:0000305" key="6"/>
<keyword id="KW-0067">ATP-binding</keyword>
<keyword id="KW-1003">Cell membrane</keyword>
<keyword id="KW-0325">Glycoprotein</keyword>
<keyword id="KW-0418">Kinase</keyword>
<keyword id="KW-0430">Lectin</keyword>
<keyword id="KW-0472">Membrane</keyword>
<keyword id="KW-0547">Nucleotide-binding</keyword>
<keyword id="KW-0675">Receptor</keyword>
<keyword id="KW-1185">Reference proteome</keyword>
<keyword id="KW-0723">Serine/threonine-protein kinase</keyword>
<keyword id="KW-0732">Signal</keyword>
<keyword id="KW-0808">Transferase</keyword>
<keyword id="KW-0812">Transmembrane</keyword>
<keyword id="KW-1133">Transmembrane helix</keyword>
<feature type="signal peptide" evidence="2">
    <location>
        <begin position="1"/>
        <end position="22"/>
    </location>
</feature>
<feature type="chain" id="PRO_0000403098" description="Probable L-type lectin-domain containing receptor kinase VI.1">
    <location>
        <begin position="23"/>
        <end position="693"/>
    </location>
</feature>
<feature type="topological domain" description="Extracellular" evidence="2">
    <location>
        <begin position="23"/>
        <end position="311"/>
    </location>
</feature>
<feature type="transmembrane region" description="Helical" evidence="2">
    <location>
        <begin position="312"/>
        <end position="332"/>
    </location>
</feature>
<feature type="topological domain" description="Cytoplasmic" evidence="2">
    <location>
        <begin position="333"/>
        <end position="693"/>
    </location>
</feature>
<feature type="domain" description="Protein kinase" evidence="3">
    <location>
        <begin position="368"/>
        <end position="642"/>
    </location>
</feature>
<feature type="region of interest" description="Legume-lectin like">
    <location>
        <begin position="33"/>
        <end position="279"/>
    </location>
</feature>
<feature type="region of interest" description="Disordered" evidence="5">
    <location>
        <begin position="670"/>
        <end position="693"/>
    </location>
</feature>
<feature type="active site" description="Proton acceptor" evidence="3 4">
    <location>
        <position position="495"/>
    </location>
</feature>
<feature type="binding site" evidence="3">
    <location>
        <begin position="374"/>
        <end position="382"/>
    </location>
    <ligand>
        <name>ATP</name>
        <dbReference type="ChEBI" id="CHEBI:30616"/>
    </ligand>
</feature>
<feature type="binding site" evidence="3">
    <location>
        <position position="396"/>
    </location>
    <ligand>
        <name>ATP</name>
        <dbReference type="ChEBI" id="CHEBI:30616"/>
    </ligand>
</feature>
<feature type="glycosylation site" description="N-linked (GlcNAc...) asparagine" evidence="2">
    <location>
        <position position="21"/>
    </location>
</feature>
<feature type="glycosylation site" description="N-linked (GlcNAc...) asparagine" evidence="2">
    <location>
        <position position="44"/>
    </location>
</feature>
<feature type="glycosylation site" description="N-linked (GlcNAc...) asparagine" evidence="2">
    <location>
        <position position="71"/>
    </location>
</feature>
<feature type="glycosylation site" description="N-linked (GlcNAc...) asparagine" evidence="2">
    <location>
        <position position="89"/>
    </location>
</feature>
<feature type="glycosylation site" description="N-linked (GlcNAc...) asparagine" evidence="2">
    <location>
        <position position="141"/>
    </location>
</feature>
<feature type="glycosylation site" description="N-linked (GlcNAc...) asparagine" evidence="2">
    <location>
        <position position="180"/>
    </location>
</feature>
<feature type="glycosylation site" description="N-linked (GlcNAc...) asparagine" evidence="2">
    <location>
        <position position="223"/>
    </location>
</feature>